<proteinExistence type="evidence at protein level"/>
<evidence type="ECO:0000255" key="1"/>
<evidence type="ECO:0000255" key="2">
    <source>
        <dbReference type="PROSITE-ProRule" id="PRU00143"/>
    </source>
</evidence>
<evidence type="ECO:0000269" key="3">
    <source>
    </source>
</evidence>
<evidence type="ECO:0000269" key="4">
    <source>
    </source>
</evidence>
<evidence type="ECO:0000303" key="5">
    <source>
    </source>
</evidence>
<evidence type="ECO:0000305" key="6"/>
<evidence type="ECO:0000305" key="7">
    <source>
    </source>
</evidence>
<evidence type="ECO:0007829" key="8">
    <source>
        <dbReference type="PDB" id="1FC6"/>
    </source>
</evidence>
<evidence type="ECO:0007829" key="9">
    <source>
        <dbReference type="PDB" id="1FCF"/>
    </source>
</evidence>
<comment type="function">
    <text evidence="4">Protease involved in the C-terminal processing of the chloroplastic D1 protein of photosystem II. This proteolytic processing is necessary to allow the light-driven assembly of the tetranuclear manganese cluster, which is responsible for photosynthetic water oxidation.</text>
</comment>
<comment type="catalytic activity">
    <reaction evidence="5">
        <text>The enzyme shows specific recognition of a C-terminal tripeptide, Xaa-Yaa-Zaa, in which Xaa is preferably Ala or Leu, Yaa is preferably Ala or Tyr, and Zaa is preferably Ala, but then cleaves at a variable distance from the C-terminus. A typical cleavage is -Ala-Ala-|-Arg-Ala-Ala-Lys-Glu-Asn-Tyr-Ala-Leu-Ala-Ala.</text>
        <dbReference type="EC" id="3.4.21.102"/>
    </reaction>
</comment>
<comment type="activity regulation">
    <text evidence="4">Not inhibited by antipain, 4-amidinophenylmethanesulfonyl fluoride, aprotinin, chymostatin, 3,4-dichloroisocoumarin, diisopropyl fluorophosphate, E64, EDTA, EGTA, iodoacetamide, leupeptin, pepstatin, o-phenanthroline, N-ethylmaleimide, phosphoramidon or phenylmethylsulfonyl fluoride.</text>
</comment>
<comment type="biophysicochemical properties">
    <phDependence>
        <text evidence="4">Optimum pH is 6.2.</text>
    </phDependence>
</comment>
<comment type="subunit">
    <text evidence="3">Monomer.</text>
</comment>
<comment type="subcellular location">
    <subcellularLocation>
        <location evidence="5">Plastid</location>
        <location evidence="5">Chloroplast thylakoid lumen</location>
    </subcellularLocation>
</comment>
<comment type="disruption phenotype">
    <text evidence="7">The LF-1 strain contains a frameshift causing a premature stop codon within ctpA. This strain is unable to process the precursor form of D1.</text>
</comment>
<comment type="similarity">
    <text evidence="6">Belongs to the peptidase S41A family.</text>
</comment>
<sequence length="464" mass="48615">MHSRTNCLQTSVRAPQPHFRPFTAVKTCRQRCSTTAAAAKRDQAQEQQPWIQVGLGLAAAATAVAVGLGAAALPAQAVTSEQLLFLEAWRAVDRAYVDKSFNGQSWFKLRETYLKKEPMDRRAQTYDAIRKLLAVLDDPFTRFLEPSRLAALRRGTAGSVTGVGLEITYDGGSGKDVVVLTPAPGGPAEKAGARAGDVIVTVDGTAVKGLSLYDVSDLLQGEADSQVEVVLHAPGAPSNTRTLQLTRQKVTINPVTFTTCSNVAAAALPPGAAKQQLGYVRLATFNSNTTAAAQQAFTELSKQGVAGLVLDIRNNGGGLFPAGVNVARMLVDRGDLVLIADSQGIRDIYSADGNSIDSATPLVVLVNRGTASASEVLAGALKDSKRGLIAGERTFGKGLIQTVVDLSDGSGVAVTVARYQTPAGVDINKIGVSPDVQLDPEVLPTDLEGVCRVLGSDAAPRLFG</sequence>
<feature type="transit peptide" description="Chloroplast" evidence="1">
    <location>
        <begin position="1"/>
        <end position="32"/>
    </location>
</feature>
<feature type="transit peptide" description="Thylakoid" evidence="4">
    <location>
        <begin position="33"/>
        <end position="77"/>
    </location>
</feature>
<feature type="chain" id="PRO_0000419746" description="C-terminal processing peptidase, chloroplastic">
    <location>
        <begin position="78"/>
        <end position="464"/>
    </location>
</feature>
<feature type="domain" description="PDZ" evidence="2">
    <location>
        <begin position="149"/>
        <end position="234"/>
    </location>
</feature>
<feature type="active site" description="Charge relay system" evidence="3">
    <location>
        <position position="372"/>
    </location>
</feature>
<feature type="active site" description="Charge relay system" evidence="3">
    <location>
        <position position="397"/>
    </location>
</feature>
<feature type="helix" evidence="8">
    <location>
        <begin position="80"/>
        <end position="95"/>
    </location>
</feature>
<feature type="helix" evidence="8">
    <location>
        <begin position="101"/>
        <end position="103"/>
    </location>
</feature>
<feature type="helix" evidence="8">
    <location>
        <begin position="106"/>
        <end position="116"/>
    </location>
</feature>
<feature type="helix" evidence="8">
    <location>
        <begin position="122"/>
        <end position="134"/>
    </location>
</feature>
<feature type="strand" evidence="8">
    <location>
        <begin position="142"/>
        <end position="144"/>
    </location>
</feature>
<feature type="helix" evidence="8">
    <location>
        <begin position="146"/>
        <end position="154"/>
    </location>
</feature>
<feature type="strand" evidence="8">
    <location>
        <begin position="156"/>
        <end position="159"/>
    </location>
</feature>
<feature type="strand" evidence="8">
    <location>
        <begin position="164"/>
        <end position="169"/>
    </location>
</feature>
<feature type="strand" evidence="9">
    <location>
        <begin position="171"/>
        <end position="173"/>
    </location>
</feature>
<feature type="strand" evidence="8">
    <location>
        <begin position="177"/>
        <end position="182"/>
    </location>
</feature>
<feature type="helix" evidence="8">
    <location>
        <begin position="187"/>
        <end position="190"/>
    </location>
</feature>
<feature type="strand" evidence="8">
    <location>
        <begin position="198"/>
        <end position="202"/>
    </location>
</feature>
<feature type="helix" evidence="8">
    <location>
        <begin position="212"/>
        <end position="219"/>
    </location>
</feature>
<feature type="strand" evidence="8">
    <location>
        <begin position="226"/>
        <end position="233"/>
    </location>
</feature>
<feature type="strand" evidence="8">
    <location>
        <begin position="236"/>
        <end position="246"/>
    </location>
</feature>
<feature type="strand" evidence="8">
    <location>
        <begin position="255"/>
        <end position="260"/>
    </location>
</feature>
<feature type="helix" evidence="8">
    <location>
        <begin position="265"/>
        <end position="267"/>
    </location>
</feature>
<feature type="strand" evidence="8">
    <location>
        <begin position="273"/>
        <end position="275"/>
    </location>
</feature>
<feature type="strand" evidence="8">
    <location>
        <begin position="277"/>
        <end position="282"/>
    </location>
</feature>
<feature type="helix" evidence="8">
    <location>
        <begin position="289"/>
        <end position="302"/>
    </location>
</feature>
<feature type="strand" evidence="8">
    <location>
        <begin position="306"/>
        <end position="311"/>
    </location>
</feature>
<feature type="helix" evidence="8">
    <location>
        <begin position="320"/>
        <end position="330"/>
    </location>
</feature>
<feature type="strand" evidence="8">
    <location>
        <begin position="332"/>
        <end position="341"/>
    </location>
</feature>
<feature type="strand" evidence="8">
    <location>
        <begin position="344"/>
        <end position="350"/>
    </location>
</feature>
<feature type="strand" evidence="8">
    <location>
        <begin position="358"/>
        <end position="360"/>
    </location>
</feature>
<feature type="strand" evidence="8">
    <location>
        <begin position="362"/>
        <end position="366"/>
    </location>
</feature>
<feature type="helix" evidence="8">
    <location>
        <begin position="373"/>
        <end position="383"/>
    </location>
</feature>
<feature type="strand" evidence="8">
    <location>
        <begin position="386"/>
        <end position="392"/>
    </location>
</feature>
<feature type="strand" evidence="8">
    <location>
        <begin position="399"/>
        <end position="405"/>
    </location>
</feature>
<feature type="strand" evidence="8">
    <location>
        <begin position="411"/>
        <end position="420"/>
    </location>
</feature>
<feature type="turn" evidence="8">
    <location>
        <begin position="428"/>
        <end position="430"/>
    </location>
</feature>
<feature type="strand" evidence="8">
    <location>
        <begin position="435"/>
        <end position="437"/>
    </location>
</feature>
<feature type="helix" evidence="8">
    <location>
        <begin position="447"/>
        <end position="455"/>
    </location>
</feature>
<organism>
    <name type="scientific">Tetradesmus obliquus</name>
    <name type="common">Green alga</name>
    <name type="synonym">Acutodesmus obliquus</name>
    <dbReference type="NCBI Taxonomy" id="3088"/>
    <lineage>
        <taxon>Eukaryota</taxon>
        <taxon>Viridiplantae</taxon>
        <taxon>Chlorophyta</taxon>
        <taxon>core chlorophytes</taxon>
        <taxon>Chlorophyceae</taxon>
        <taxon>CS clade</taxon>
        <taxon>Sphaeropleales</taxon>
        <taxon>Scenedesmaceae</taxon>
        <taxon>Tetradesmus</taxon>
    </lineage>
</organism>
<keyword id="KW-0002">3D-structure</keyword>
<keyword id="KW-0150">Chloroplast</keyword>
<keyword id="KW-0903">Direct protein sequencing</keyword>
<keyword id="KW-0378">Hydrolase</keyword>
<keyword id="KW-0934">Plastid</keyword>
<keyword id="KW-0645">Protease</keyword>
<keyword id="KW-0720">Serine protease</keyword>
<keyword id="KW-0793">Thylakoid</keyword>
<keyword id="KW-0809">Transit peptide</keyword>
<reference key="1">
    <citation type="journal article" date="1997" name="J. Biol. Chem.">
        <title>The D1 C-terminal processing protease of photosystem II from Scenedesmus obliquus. Protein purification and gene characterization in wild type and processing mutants.</title>
        <authorList>
            <person name="Trost J.T."/>
            <person name="Chisholm D.A."/>
            <person name="Jordan D.B."/>
            <person name="Diner B.A."/>
        </authorList>
    </citation>
    <scope>NUCLEOTIDE SEQUENCE [MRNA]</scope>
    <scope>PROTEIN SEQUENCE OF 78-113; 155-174; 282-301; 347-368; 399-408 AND 430-452</scope>
    <scope>FUNCTION</scope>
    <scope>CATALYTIC ACTIVITY</scope>
    <scope>ACTIVITY REGULATION</scope>
    <scope>BIOPHYSICOCHEMICAL PROPERTIES</scope>
    <scope>SUBCELLULAR LOCATION</scope>
    <scope>DISRUPTION PHENOTYPE</scope>
    <source>
        <strain>D3</strain>
    </source>
</reference>
<reference key="2">
    <citation type="journal article" date="2000" name="Nat. Struct. Biol.">
        <title>Crystal structures of the photosystem II D1 C-terminal processing protease.</title>
        <authorList>
            <person name="Liao D.I."/>
            <person name="Qian J."/>
            <person name="Chisholm D.A."/>
            <person name="Jordan D.B."/>
            <person name="Diner B.A."/>
        </authorList>
    </citation>
    <scope>X-RAY CRYSTALLOGRAPHY (1.80 ANGSTROMS) OF 78-464</scope>
    <scope>SUBUNIT</scope>
    <scope>ACTIVE SITE</scope>
</reference>
<accession>O04073</accession>
<gene>
    <name type="primary">ctpA</name>
    <name type="synonym">D1P</name>
</gene>
<dbReference type="EC" id="3.4.21.102"/>
<dbReference type="EMBL" id="U85200">
    <property type="protein sequence ID" value="AAC49799.1"/>
    <property type="molecule type" value="mRNA"/>
</dbReference>
<dbReference type="PIR" id="T10500">
    <property type="entry name" value="T10500"/>
</dbReference>
<dbReference type="PDB" id="1FC6">
    <property type="method" value="X-ray"/>
    <property type="resolution" value="1.80 A"/>
    <property type="chains" value="A=78-464"/>
</dbReference>
<dbReference type="PDB" id="1FC7">
    <property type="method" value="X-ray"/>
    <property type="resolution" value="2.00 A"/>
    <property type="chains" value="A=78-464"/>
</dbReference>
<dbReference type="PDB" id="1FC9">
    <property type="method" value="X-ray"/>
    <property type="resolution" value="1.90 A"/>
    <property type="chains" value="A=78-464"/>
</dbReference>
<dbReference type="PDB" id="1FCF">
    <property type="method" value="X-ray"/>
    <property type="resolution" value="2.10 A"/>
    <property type="chains" value="A=78-464"/>
</dbReference>
<dbReference type="PDBsum" id="1FC6"/>
<dbReference type="PDBsum" id="1FC7"/>
<dbReference type="PDBsum" id="1FC9"/>
<dbReference type="PDBsum" id="1FCF"/>
<dbReference type="SMR" id="O04073"/>
<dbReference type="MEROPS" id="S41.002"/>
<dbReference type="KEGG" id="ag:AAC49799"/>
<dbReference type="EvolutionaryTrace" id="O04073"/>
<dbReference type="GO" id="GO:0009543">
    <property type="term" value="C:chloroplast thylakoid lumen"/>
    <property type="evidence" value="ECO:0007669"/>
    <property type="project" value="UniProtKB-SubCell"/>
</dbReference>
<dbReference type="GO" id="GO:0004252">
    <property type="term" value="F:serine-type endopeptidase activity"/>
    <property type="evidence" value="ECO:0007669"/>
    <property type="project" value="UniProtKB-EC"/>
</dbReference>
<dbReference type="GO" id="GO:0006508">
    <property type="term" value="P:proteolysis"/>
    <property type="evidence" value="ECO:0007669"/>
    <property type="project" value="UniProtKB-KW"/>
</dbReference>
<dbReference type="CDD" id="cd06782">
    <property type="entry name" value="cpPDZ_CPP-like"/>
    <property type="match status" value="1"/>
</dbReference>
<dbReference type="CDD" id="cd07560">
    <property type="entry name" value="Peptidase_S41_CPP"/>
    <property type="match status" value="1"/>
</dbReference>
<dbReference type="FunFam" id="3.30.750.44:FF:000002">
    <property type="entry name" value="carboxyl-terminal-processing peptidase 2, chloroplastic"/>
    <property type="match status" value="1"/>
</dbReference>
<dbReference type="Gene3D" id="2.30.42.10">
    <property type="match status" value="1"/>
</dbReference>
<dbReference type="Gene3D" id="3.30.750.44">
    <property type="match status" value="1"/>
</dbReference>
<dbReference type="Gene3D" id="3.90.226.10">
    <property type="entry name" value="2-enoyl-CoA Hydratase, Chain A, domain 1"/>
    <property type="match status" value="1"/>
</dbReference>
<dbReference type="InterPro" id="IPR029045">
    <property type="entry name" value="ClpP/crotonase-like_dom_sf"/>
</dbReference>
<dbReference type="InterPro" id="IPR001478">
    <property type="entry name" value="PDZ"/>
</dbReference>
<dbReference type="InterPro" id="IPR041489">
    <property type="entry name" value="PDZ_6"/>
</dbReference>
<dbReference type="InterPro" id="IPR036034">
    <property type="entry name" value="PDZ_sf"/>
</dbReference>
<dbReference type="InterPro" id="IPR004447">
    <property type="entry name" value="Peptidase_S41A"/>
</dbReference>
<dbReference type="InterPro" id="IPR005151">
    <property type="entry name" value="Tail-specific_protease"/>
</dbReference>
<dbReference type="NCBIfam" id="TIGR00225">
    <property type="entry name" value="prc"/>
    <property type="match status" value="1"/>
</dbReference>
<dbReference type="PANTHER" id="PTHR32060:SF7">
    <property type="entry name" value="CARBOXYL-TERMINAL-PROCESSING PEPTIDASE 2, CHLOROPLASTIC"/>
    <property type="match status" value="1"/>
</dbReference>
<dbReference type="PANTHER" id="PTHR32060">
    <property type="entry name" value="TAIL-SPECIFIC PROTEASE"/>
    <property type="match status" value="1"/>
</dbReference>
<dbReference type="Pfam" id="PF17820">
    <property type="entry name" value="PDZ_6"/>
    <property type="match status" value="1"/>
</dbReference>
<dbReference type="Pfam" id="PF03572">
    <property type="entry name" value="Peptidase_S41"/>
    <property type="match status" value="1"/>
</dbReference>
<dbReference type="SMART" id="SM00228">
    <property type="entry name" value="PDZ"/>
    <property type="match status" value="1"/>
</dbReference>
<dbReference type="SMART" id="SM00245">
    <property type="entry name" value="TSPc"/>
    <property type="match status" value="1"/>
</dbReference>
<dbReference type="SUPFAM" id="SSF52096">
    <property type="entry name" value="ClpP/crotonase"/>
    <property type="match status" value="1"/>
</dbReference>
<dbReference type="SUPFAM" id="SSF50156">
    <property type="entry name" value="PDZ domain-like"/>
    <property type="match status" value="1"/>
</dbReference>
<dbReference type="PROSITE" id="PS50106">
    <property type="entry name" value="PDZ"/>
    <property type="match status" value="1"/>
</dbReference>
<protein>
    <recommendedName>
        <fullName>C-terminal processing peptidase, chloroplastic</fullName>
        <ecNumber>3.4.21.102</ecNumber>
    </recommendedName>
    <alternativeName>
        <fullName>D1 C-terminal processing protease</fullName>
    </alternativeName>
    <alternativeName>
        <fullName>Photosystem II D1 protein processing peptidase</fullName>
    </alternativeName>
</protein>
<name>CTPA_TETOB</name>